<feature type="chain" id="PRO_0000362678" description="NADH-quinone oxidoreductase subunit A">
    <location>
        <begin position="1"/>
        <end position="147"/>
    </location>
</feature>
<feature type="transmembrane region" description="Helical" evidence="1">
    <location>
        <begin position="16"/>
        <end position="36"/>
    </location>
</feature>
<feature type="transmembrane region" description="Helical" evidence="1">
    <location>
        <begin position="68"/>
        <end position="88"/>
    </location>
</feature>
<feature type="transmembrane region" description="Helical" evidence="1">
    <location>
        <begin position="98"/>
        <end position="118"/>
    </location>
</feature>
<keyword id="KW-0997">Cell inner membrane</keyword>
<keyword id="KW-1003">Cell membrane</keyword>
<keyword id="KW-0472">Membrane</keyword>
<keyword id="KW-0520">NAD</keyword>
<keyword id="KW-0874">Quinone</keyword>
<keyword id="KW-1278">Translocase</keyword>
<keyword id="KW-0812">Transmembrane</keyword>
<keyword id="KW-1133">Transmembrane helix</keyword>
<keyword id="KW-0813">Transport</keyword>
<keyword id="KW-0830">Ubiquinone</keyword>
<proteinExistence type="inferred from homology"/>
<dbReference type="EC" id="7.1.1.-" evidence="1"/>
<dbReference type="EMBL" id="CP000946">
    <property type="protein sequence ID" value="ACA77030.1"/>
    <property type="molecule type" value="Genomic_DNA"/>
</dbReference>
<dbReference type="RefSeq" id="WP_000062997.1">
    <property type="nucleotide sequence ID" value="NZ_MTFT01000028.1"/>
</dbReference>
<dbReference type="SMR" id="B1IXQ4"/>
<dbReference type="GeneID" id="93774886"/>
<dbReference type="KEGG" id="ecl:EcolC_1364"/>
<dbReference type="HOGENOM" id="CLU_119549_2_0_6"/>
<dbReference type="GO" id="GO:0030964">
    <property type="term" value="C:NADH dehydrogenase complex"/>
    <property type="evidence" value="ECO:0007669"/>
    <property type="project" value="TreeGrafter"/>
</dbReference>
<dbReference type="GO" id="GO:0005886">
    <property type="term" value="C:plasma membrane"/>
    <property type="evidence" value="ECO:0007669"/>
    <property type="project" value="UniProtKB-SubCell"/>
</dbReference>
<dbReference type="GO" id="GO:0008137">
    <property type="term" value="F:NADH dehydrogenase (ubiquinone) activity"/>
    <property type="evidence" value="ECO:0007669"/>
    <property type="project" value="InterPro"/>
</dbReference>
<dbReference type="GO" id="GO:0050136">
    <property type="term" value="F:NADH:ubiquinone reductase (non-electrogenic) activity"/>
    <property type="evidence" value="ECO:0007669"/>
    <property type="project" value="UniProtKB-UniRule"/>
</dbReference>
<dbReference type="GO" id="GO:0048038">
    <property type="term" value="F:quinone binding"/>
    <property type="evidence" value="ECO:0007669"/>
    <property type="project" value="UniProtKB-KW"/>
</dbReference>
<dbReference type="FunFam" id="1.20.58.1610:FF:000003">
    <property type="entry name" value="NADH-quinone oxidoreductase subunit A"/>
    <property type="match status" value="1"/>
</dbReference>
<dbReference type="Gene3D" id="1.20.58.1610">
    <property type="entry name" value="NADH:ubiquinone/plastoquinone oxidoreductase, chain 3"/>
    <property type="match status" value="1"/>
</dbReference>
<dbReference type="HAMAP" id="MF_01394">
    <property type="entry name" value="NDH1_NuoA"/>
    <property type="match status" value="1"/>
</dbReference>
<dbReference type="InterPro" id="IPR023043">
    <property type="entry name" value="NAD(P)H_OxRDtase_bac/plastid"/>
</dbReference>
<dbReference type="InterPro" id="IPR000440">
    <property type="entry name" value="NADH_UbQ/plastoQ_OxRdtase_su3"/>
</dbReference>
<dbReference type="InterPro" id="IPR038430">
    <property type="entry name" value="NDAH_ubi_oxred_su3_sf"/>
</dbReference>
<dbReference type="PANTHER" id="PTHR11058:SF21">
    <property type="entry name" value="NADH-QUINONE OXIDOREDUCTASE SUBUNIT A"/>
    <property type="match status" value="1"/>
</dbReference>
<dbReference type="PANTHER" id="PTHR11058">
    <property type="entry name" value="NADH-UBIQUINONE OXIDOREDUCTASE CHAIN 3"/>
    <property type="match status" value="1"/>
</dbReference>
<dbReference type="Pfam" id="PF00507">
    <property type="entry name" value="Oxidored_q4"/>
    <property type="match status" value="1"/>
</dbReference>
<gene>
    <name evidence="1" type="primary">nuoA</name>
    <name type="ordered locus">EcolC_1364</name>
</gene>
<evidence type="ECO:0000255" key="1">
    <source>
        <dbReference type="HAMAP-Rule" id="MF_01394"/>
    </source>
</evidence>
<reference key="1">
    <citation type="submission" date="2008-02" db="EMBL/GenBank/DDBJ databases">
        <title>Complete sequence of Escherichia coli C str. ATCC 8739.</title>
        <authorList>
            <person name="Copeland A."/>
            <person name="Lucas S."/>
            <person name="Lapidus A."/>
            <person name="Glavina del Rio T."/>
            <person name="Dalin E."/>
            <person name="Tice H."/>
            <person name="Bruce D."/>
            <person name="Goodwin L."/>
            <person name="Pitluck S."/>
            <person name="Kiss H."/>
            <person name="Brettin T."/>
            <person name="Detter J.C."/>
            <person name="Han C."/>
            <person name="Kuske C.R."/>
            <person name="Schmutz J."/>
            <person name="Larimer F."/>
            <person name="Land M."/>
            <person name="Hauser L."/>
            <person name="Kyrpides N."/>
            <person name="Mikhailova N."/>
            <person name="Ingram L."/>
            <person name="Richardson P."/>
        </authorList>
    </citation>
    <scope>NUCLEOTIDE SEQUENCE [LARGE SCALE GENOMIC DNA]</scope>
    <source>
        <strain>ATCC 8739 / DSM 1576 / NBRC 3972 / NCIMB 8545 / WDCM 00012 / Crooks</strain>
    </source>
</reference>
<sequence length="147" mass="16457">MSMSTSTEVIAHHWAFAIFLIVAIGLCCLMLVGGWFLGGRARARSKNVPFESGIDSVGSARLRLSAKFYLVAMFFVIFDVEALYLFAWSTSIRESGWVGFVEAAIFIFVLLAGLVYLVRIGALDWTPARSRRERMNPETNSIANRQR</sequence>
<protein>
    <recommendedName>
        <fullName evidence="1">NADH-quinone oxidoreductase subunit A</fullName>
        <ecNumber evidence="1">7.1.1.-</ecNumber>
    </recommendedName>
    <alternativeName>
        <fullName evidence="1">NADH dehydrogenase I subunit A</fullName>
    </alternativeName>
    <alternativeName>
        <fullName evidence="1">NDH-1 subunit A</fullName>
    </alternativeName>
    <alternativeName>
        <fullName evidence="1">NUO1</fullName>
    </alternativeName>
</protein>
<organism>
    <name type="scientific">Escherichia coli (strain ATCC 8739 / DSM 1576 / NBRC 3972 / NCIMB 8545 / WDCM 00012 / Crooks)</name>
    <dbReference type="NCBI Taxonomy" id="481805"/>
    <lineage>
        <taxon>Bacteria</taxon>
        <taxon>Pseudomonadati</taxon>
        <taxon>Pseudomonadota</taxon>
        <taxon>Gammaproteobacteria</taxon>
        <taxon>Enterobacterales</taxon>
        <taxon>Enterobacteriaceae</taxon>
        <taxon>Escherichia</taxon>
    </lineage>
</organism>
<accession>B1IXQ4</accession>
<name>NUOA_ECOLC</name>
<comment type="function">
    <text evidence="1">NDH-1 shuttles electrons from NADH, via FMN and iron-sulfur (Fe-S) centers, to quinones in the respiratory chain. The immediate electron acceptor for the enzyme in this species is believed to be ubiquinone. Couples the redox reaction to proton translocation (for every two electrons transferred, four hydrogen ions are translocated across the cytoplasmic membrane), and thus conserves the redox energy in a proton gradient.</text>
</comment>
<comment type="catalytic activity">
    <reaction evidence="1">
        <text>a quinone + NADH + 5 H(+)(in) = a quinol + NAD(+) + 4 H(+)(out)</text>
        <dbReference type="Rhea" id="RHEA:57888"/>
        <dbReference type="ChEBI" id="CHEBI:15378"/>
        <dbReference type="ChEBI" id="CHEBI:24646"/>
        <dbReference type="ChEBI" id="CHEBI:57540"/>
        <dbReference type="ChEBI" id="CHEBI:57945"/>
        <dbReference type="ChEBI" id="CHEBI:132124"/>
    </reaction>
</comment>
<comment type="subunit">
    <text evidence="1">NDH-1 is composed of 13 different subunits. Subunits NuoA, H, J, K, L, M, N constitute the membrane sector of the complex.</text>
</comment>
<comment type="subcellular location">
    <subcellularLocation>
        <location evidence="1">Cell inner membrane</location>
        <topology evidence="1">Multi-pass membrane protein</topology>
    </subcellularLocation>
</comment>
<comment type="similarity">
    <text evidence="1">Belongs to the complex I subunit 3 family.</text>
</comment>